<reference key="1">
    <citation type="journal article" date="2004" name="Proc. Natl. Acad. Sci. U.S.A.">
        <title>The diploid genome sequence of Candida albicans.</title>
        <authorList>
            <person name="Jones T."/>
            <person name="Federspiel N.A."/>
            <person name="Chibana H."/>
            <person name="Dungan J."/>
            <person name="Kalman S."/>
            <person name="Magee B.B."/>
            <person name="Newport G."/>
            <person name="Thorstenson Y.R."/>
            <person name="Agabian N."/>
            <person name="Magee P.T."/>
            <person name="Davis R.W."/>
            <person name="Scherer S."/>
        </authorList>
    </citation>
    <scope>NUCLEOTIDE SEQUENCE [LARGE SCALE GENOMIC DNA]</scope>
    <source>
        <strain>SC5314 / ATCC MYA-2876</strain>
    </source>
</reference>
<reference key="2">
    <citation type="journal article" date="2007" name="Genome Biol.">
        <title>Assembly of the Candida albicans genome into sixteen supercontigs aligned on the eight chromosomes.</title>
        <authorList>
            <person name="van het Hoog M."/>
            <person name="Rast T.J."/>
            <person name="Martchenko M."/>
            <person name="Grindle S."/>
            <person name="Dignard D."/>
            <person name="Hogues H."/>
            <person name="Cuomo C."/>
            <person name="Berriman M."/>
            <person name="Scherer S."/>
            <person name="Magee B.B."/>
            <person name="Whiteway M."/>
            <person name="Chibana H."/>
            <person name="Nantel A."/>
            <person name="Magee P.T."/>
        </authorList>
    </citation>
    <scope>GENOME REANNOTATION</scope>
    <source>
        <strain>SC5314 / ATCC MYA-2876</strain>
    </source>
</reference>
<reference key="3">
    <citation type="journal article" date="2013" name="Genome Biol.">
        <title>Assembly of a phased diploid Candida albicans genome facilitates allele-specific measurements and provides a simple model for repeat and indel structure.</title>
        <authorList>
            <person name="Muzzey D."/>
            <person name="Schwartz K."/>
            <person name="Weissman J.S."/>
            <person name="Sherlock G."/>
        </authorList>
    </citation>
    <scope>NUCLEOTIDE SEQUENCE [LARGE SCALE GENOMIC DNA]</scope>
    <scope>GENOME REANNOTATION</scope>
    <source>
        <strain>SC5314 / ATCC MYA-2876</strain>
    </source>
</reference>
<reference key="4">
    <citation type="journal article" date="2004" name="Microbiology">
        <title>Deficiencies in the essential Smp3 mannosyltransferase block glycosylphosphatidylinositol assembly and lead to defects in growth and cell wall biogenesis in Candida albicans.</title>
        <authorList>
            <person name="Grimme S.J."/>
            <person name="Colussi P.A."/>
            <person name="Taron C.H."/>
            <person name="Orlean P."/>
        </authorList>
    </citation>
    <scope>IDENTIFICATION</scope>
</reference>
<proteinExistence type="inferred from homology"/>
<sequence length="498" mass="57971">MIKINFNWRTFYLLTIVFRFVFTLSDSYIHPDEHFQSLEVLTNRILNYSTNIPWEFQDDPARSLAPLYFIYGPLLYFIKFFKLNLTALQIWYIARLQISILSWIITDFCLYWMLPSKPERIKAIFFTSTSYITLVYQNHLFSNSIETLLLLVTILLIDDLRYVQESKDQDVQNLNKNKNLFYTGVLISLGIFNRITFPAFLILPGWFVMKYVLKHYVSGLYLVMGFFSTTALLILVDTILFGNINNVVAEPFNVSSYIIAPLNNLLYNARYENLAQHGIHPYYTHILVNMPQILGPGLIFFVSKSYTKTTPFLTVISGLLFLSVIPHQELRFLIPLLPLACCSFDFTLKWVQPWMLYTWYIFNIFMSILMGKLHQGGVVPVLDHIKSEASVQVWWRTYTPPSWILGSNSTETTHLGEKLNDNKFINIVDCMGADSKEVQQILQTISTNKPVYLITPIASFKHFDESRFSPVWNYTFHLDLDHLDFADIQPGLGVYQLL</sequence>
<feature type="chain" id="PRO_0000246274" description="GPI mannosyltransferase 4">
    <location>
        <begin position="1"/>
        <end position="498"/>
    </location>
</feature>
<feature type="transmembrane region" description="Helical" evidence="2">
    <location>
        <begin position="11"/>
        <end position="31"/>
    </location>
</feature>
<feature type="transmembrane region" description="Helical" evidence="2">
    <location>
        <begin position="63"/>
        <end position="83"/>
    </location>
</feature>
<feature type="transmembrane region" description="Helical" evidence="2">
    <location>
        <begin position="96"/>
        <end position="116"/>
    </location>
</feature>
<feature type="transmembrane region" description="Helical" evidence="2">
    <location>
        <begin position="140"/>
        <end position="160"/>
    </location>
</feature>
<feature type="transmembrane region" description="Helical" evidence="2">
    <location>
        <begin position="189"/>
        <end position="209"/>
    </location>
</feature>
<feature type="transmembrane region" description="Helical" evidence="2">
    <location>
        <begin position="222"/>
        <end position="242"/>
    </location>
</feature>
<feature type="transmembrane region" description="Helical" evidence="2">
    <location>
        <begin position="247"/>
        <end position="267"/>
    </location>
</feature>
<feature type="transmembrane region" description="Helical" evidence="2">
    <location>
        <begin position="282"/>
        <end position="302"/>
    </location>
</feature>
<feature type="transmembrane region" description="Helical" evidence="2">
    <location>
        <begin position="310"/>
        <end position="330"/>
    </location>
</feature>
<feature type="transmembrane region" description="Helical" evidence="2">
    <location>
        <begin position="332"/>
        <end position="348"/>
    </location>
</feature>
<feature type="transmembrane region" description="Helical" evidence="2">
    <location>
        <begin position="350"/>
        <end position="370"/>
    </location>
</feature>
<feature type="glycosylation site" description="N-linked (GlcNAc...) asparagine" evidence="2">
    <location>
        <position position="47"/>
    </location>
</feature>
<feature type="glycosylation site" description="N-linked (GlcNAc...) asparagine" evidence="2">
    <location>
        <position position="84"/>
    </location>
</feature>
<feature type="glycosylation site" description="N-linked (GlcNAc...) asparagine" evidence="2">
    <location>
        <position position="408"/>
    </location>
</feature>
<feature type="glycosylation site" description="N-linked (GlcNAc...) asparagine" evidence="2">
    <location>
        <position position="473"/>
    </location>
</feature>
<name>SMP3_CANAL</name>
<keyword id="KW-0256">Endoplasmic reticulum</keyword>
<keyword id="KW-0325">Glycoprotein</keyword>
<keyword id="KW-0328">Glycosyltransferase</keyword>
<keyword id="KW-0337">GPI-anchor biosynthesis</keyword>
<keyword id="KW-0472">Membrane</keyword>
<keyword id="KW-1185">Reference proteome</keyword>
<keyword id="KW-0808">Transferase</keyword>
<keyword id="KW-0812">Transmembrane</keyword>
<keyword id="KW-1133">Transmembrane helix</keyword>
<dbReference type="EC" id="2.4.1.-"/>
<dbReference type="EMBL" id="CP017624">
    <property type="protein sequence ID" value="AOW27344.1"/>
    <property type="molecule type" value="Genomic_DNA"/>
</dbReference>
<dbReference type="RefSeq" id="XP_715333.2">
    <property type="nucleotide sequence ID" value="XM_710240.2"/>
</dbReference>
<dbReference type="FunCoup" id="Q5A0L9">
    <property type="interactions" value="51"/>
</dbReference>
<dbReference type="STRING" id="237561.Q5A0L9"/>
<dbReference type="GlyCosmos" id="Q5A0L9">
    <property type="glycosylation" value="4 sites, No reported glycans"/>
</dbReference>
<dbReference type="EnsemblFungi" id="C2_03070C_A-T">
    <property type="protein sequence ID" value="C2_03070C_A-T-p1"/>
    <property type="gene ID" value="C2_03070C_A"/>
</dbReference>
<dbReference type="GeneID" id="3642980"/>
<dbReference type="KEGG" id="cal:CAALFM_C203070CA"/>
<dbReference type="CGD" id="CAL0000175734">
    <property type="gene designation" value="SMP3"/>
</dbReference>
<dbReference type="VEuPathDB" id="FungiDB:C2_03070C_A"/>
<dbReference type="HOGENOM" id="CLU_022957_2_0_1"/>
<dbReference type="InParanoid" id="Q5A0L9"/>
<dbReference type="OrthoDB" id="10066429at2759"/>
<dbReference type="UniPathway" id="UPA00196"/>
<dbReference type="PRO" id="PR:Q5A0L9"/>
<dbReference type="Proteomes" id="UP000000559">
    <property type="component" value="Chromosome 2"/>
</dbReference>
<dbReference type="GO" id="GO:0005789">
    <property type="term" value="C:endoplasmic reticulum membrane"/>
    <property type="evidence" value="ECO:0000318"/>
    <property type="project" value="GO_Central"/>
</dbReference>
<dbReference type="GO" id="GO:0000026">
    <property type="term" value="F:alpha-1,2-mannosyltransferase activity"/>
    <property type="evidence" value="ECO:0000315"/>
    <property type="project" value="CGD"/>
</dbReference>
<dbReference type="GO" id="GO:0009272">
    <property type="term" value="P:fungal-type cell wall biogenesis"/>
    <property type="evidence" value="ECO:0000315"/>
    <property type="project" value="CGD"/>
</dbReference>
<dbReference type="GO" id="GO:0006506">
    <property type="term" value="P:GPI anchor biosynthetic process"/>
    <property type="evidence" value="ECO:0000315"/>
    <property type="project" value="CGD"/>
</dbReference>
<dbReference type="InterPro" id="IPR005599">
    <property type="entry name" value="GPI_mannosylTrfase"/>
</dbReference>
<dbReference type="PANTHER" id="PTHR22760">
    <property type="entry name" value="GLYCOSYLTRANSFERASE"/>
    <property type="match status" value="1"/>
</dbReference>
<dbReference type="PANTHER" id="PTHR22760:SF3">
    <property type="entry name" value="GPI MANNOSYLTRANSFERASE 4"/>
    <property type="match status" value="1"/>
</dbReference>
<dbReference type="Pfam" id="PF03901">
    <property type="entry name" value="Glyco_transf_22"/>
    <property type="match status" value="1"/>
</dbReference>
<gene>
    <name type="primary">SMP3</name>
    <name type="ordered locus">CAALFM_C203070CA</name>
    <name type="ORF">CaO19.13214</name>
    <name type="ORF">CaO19.5792</name>
</gene>
<comment type="function">
    <text evidence="1">Alpha-1,2-mannosyltransferase involved in glycosylphosphatidylinositol-anchor biosynthesis. Transfers a fourth mannose to trimannosyl-GPIs during GPI precursor assembly. The presence of a fourth mannose in GPI is essential in fungi (By similarity).</text>
</comment>
<comment type="pathway">
    <text>Glycolipid biosynthesis; glycosylphosphatidylinositol-anchor biosynthesis.</text>
</comment>
<comment type="subcellular location">
    <subcellularLocation>
        <location evidence="1">Endoplasmic reticulum membrane</location>
        <topology evidence="1">Multi-pass membrane protein</topology>
    </subcellularLocation>
</comment>
<comment type="miscellaneous">
    <text>May be used as a target for the development of some new fungicide, due the fact the presence of a fourth mannose in GPI-anchor proteins is essential for viability in fungi but not in mammals.</text>
</comment>
<comment type="similarity">
    <text evidence="3">Belongs to the glycosyltransferase 22 family. PIGZ subfamily.</text>
</comment>
<evidence type="ECO:0000250" key="1"/>
<evidence type="ECO:0000255" key="2"/>
<evidence type="ECO:0000305" key="3"/>
<accession>Q5A0L9</accession>
<accession>A0A1D8PGU9</accession>
<organism>
    <name type="scientific">Candida albicans (strain SC5314 / ATCC MYA-2876)</name>
    <name type="common">Yeast</name>
    <dbReference type="NCBI Taxonomy" id="237561"/>
    <lineage>
        <taxon>Eukaryota</taxon>
        <taxon>Fungi</taxon>
        <taxon>Dikarya</taxon>
        <taxon>Ascomycota</taxon>
        <taxon>Saccharomycotina</taxon>
        <taxon>Pichiomycetes</taxon>
        <taxon>Debaryomycetaceae</taxon>
        <taxon>Candida/Lodderomyces clade</taxon>
        <taxon>Candida</taxon>
    </lineage>
</organism>
<protein>
    <recommendedName>
        <fullName>GPI mannosyltransferase 4</fullName>
        <ecNumber>2.4.1.-</ecNumber>
    </recommendedName>
    <alternativeName>
        <fullName>CaSMP3</fullName>
    </alternativeName>
    <alternativeName>
        <fullName>GPI mannosyltransferase IV</fullName>
        <shortName>GPI-MT-IV</shortName>
    </alternativeName>
</protein>